<keyword id="KW-0002">3D-structure</keyword>
<keyword id="KW-0997">Cell inner membrane</keyword>
<keyword id="KW-1003">Cell membrane</keyword>
<keyword id="KW-0407">Ion channel</keyword>
<keyword id="KW-0406">Ion transport</keyword>
<keyword id="KW-0472">Membrane</keyword>
<keyword id="KW-1185">Reference proteome</keyword>
<keyword id="KW-0812">Transmembrane</keyword>
<keyword id="KW-1133">Transmembrane helix</keyword>
<keyword id="KW-0813">Transport</keyword>
<protein>
    <recommendedName>
        <fullName>Small-conductance mechanosensitive channel</fullName>
    </recommendedName>
</protein>
<accession>Q8R6L9</accession>
<dbReference type="EMBL" id="AE008691">
    <property type="protein sequence ID" value="AAM25887.1"/>
    <property type="molecule type" value="Genomic_DNA"/>
</dbReference>
<dbReference type="RefSeq" id="WP_011026752.1">
    <property type="nucleotide sequence ID" value="NC_003869.1"/>
</dbReference>
<dbReference type="PDB" id="3T9N">
    <property type="method" value="X-ray"/>
    <property type="resolution" value="3.46 A"/>
    <property type="chains" value="A/B/C/D/E/F/G=1-282"/>
</dbReference>
<dbReference type="PDB" id="3UDC">
    <property type="method" value="X-ray"/>
    <property type="resolution" value="3.35 A"/>
    <property type="chains" value="A/B/C/D/E/F/G=1-270"/>
</dbReference>
<dbReference type="PDBsum" id="3T9N"/>
<dbReference type="PDBsum" id="3UDC"/>
<dbReference type="SMR" id="Q8R6L9"/>
<dbReference type="DIP" id="DIP-60083N"/>
<dbReference type="STRING" id="273068.TTE2783"/>
<dbReference type="KEGG" id="tte:TTE2783"/>
<dbReference type="eggNOG" id="COG0668">
    <property type="taxonomic scope" value="Bacteria"/>
</dbReference>
<dbReference type="HOGENOM" id="CLU_037945_8_2_9"/>
<dbReference type="EvolutionaryTrace" id="Q8R6L9"/>
<dbReference type="Proteomes" id="UP000000555">
    <property type="component" value="Chromosome"/>
</dbReference>
<dbReference type="GO" id="GO:0005886">
    <property type="term" value="C:plasma membrane"/>
    <property type="evidence" value="ECO:0007669"/>
    <property type="project" value="UniProtKB-SubCell"/>
</dbReference>
<dbReference type="GO" id="GO:0042802">
    <property type="term" value="F:identical protein binding"/>
    <property type="evidence" value="ECO:0000353"/>
    <property type="project" value="IntAct"/>
</dbReference>
<dbReference type="GO" id="GO:0008381">
    <property type="term" value="F:mechanosensitive monoatomic ion channel activity"/>
    <property type="evidence" value="ECO:0007669"/>
    <property type="project" value="InterPro"/>
</dbReference>
<dbReference type="FunFam" id="2.30.30.60:FF:000001">
    <property type="entry name" value="MscS Mechanosensitive ion channel"/>
    <property type="match status" value="1"/>
</dbReference>
<dbReference type="FunFam" id="3.30.70.100:FF:000018">
    <property type="entry name" value="MscS mechanosensitive ion channel"/>
    <property type="match status" value="1"/>
</dbReference>
<dbReference type="Gene3D" id="1.10.287.1260">
    <property type="match status" value="1"/>
</dbReference>
<dbReference type="Gene3D" id="2.30.30.60">
    <property type="match status" value="1"/>
</dbReference>
<dbReference type="Gene3D" id="3.30.70.100">
    <property type="match status" value="1"/>
</dbReference>
<dbReference type="InterPro" id="IPR010920">
    <property type="entry name" value="LSM_dom_sf"/>
</dbReference>
<dbReference type="InterPro" id="IPR049142">
    <property type="entry name" value="MS_channel_1st"/>
</dbReference>
<dbReference type="InterPro" id="IPR049278">
    <property type="entry name" value="MS_channel_C"/>
</dbReference>
<dbReference type="InterPro" id="IPR023408">
    <property type="entry name" value="MscS_beta-dom_sf"/>
</dbReference>
<dbReference type="InterPro" id="IPR006685">
    <property type="entry name" value="MscS_channel_2nd"/>
</dbReference>
<dbReference type="InterPro" id="IPR011066">
    <property type="entry name" value="MscS_channel_C_sf"/>
</dbReference>
<dbReference type="InterPro" id="IPR011014">
    <property type="entry name" value="MscS_channel_TM-2"/>
</dbReference>
<dbReference type="InterPro" id="IPR045276">
    <property type="entry name" value="YbiO_bact"/>
</dbReference>
<dbReference type="NCBIfam" id="NF047601">
    <property type="entry name" value="MscSThanab"/>
    <property type="match status" value="1"/>
</dbReference>
<dbReference type="PANTHER" id="PTHR30460">
    <property type="entry name" value="MODERATE CONDUCTANCE MECHANOSENSITIVE CHANNEL YBIO"/>
    <property type="match status" value="1"/>
</dbReference>
<dbReference type="PANTHER" id="PTHR30460:SF0">
    <property type="entry name" value="MODERATE CONDUCTANCE MECHANOSENSITIVE CHANNEL YBIO"/>
    <property type="match status" value="1"/>
</dbReference>
<dbReference type="Pfam" id="PF21088">
    <property type="entry name" value="MS_channel_1st"/>
    <property type="match status" value="1"/>
</dbReference>
<dbReference type="Pfam" id="PF00924">
    <property type="entry name" value="MS_channel_2nd"/>
    <property type="match status" value="1"/>
</dbReference>
<dbReference type="Pfam" id="PF21082">
    <property type="entry name" value="MS_channel_3rd"/>
    <property type="match status" value="1"/>
</dbReference>
<dbReference type="SUPFAM" id="SSF82689">
    <property type="entry name" value="Mechanosensitive channel protein MscS (YggB), C-terminal domain"/>
    <property type="match status" value="1"/>
</dbReference>
<dbReference type="SUPFAM" id="SSF82861">
    <property type="entry name" value="Mechanosensitive channel protein MscS (YggB), transmembrane region"/>
    <property type="match status" value="1"/>
</dbReference>
<dbReference type="SUPFAM" id="SSF50182">
    <property type="entry name" value="Sm-like ribonucleoproteins"/>
    <property type="match status" value="1"/>
</dbReference>
<name>MSCS_CALS4</name>
<comment type="function">
    <text evidence="1">Mechanosensitive ion channel that participates in the regulation of osmotic pressure changes within the cell, opening in response to stretch forces in the membrane lipid bilayer, without the need for other proteins. Has high selectivity for anions, and may contribute to resistance to hypoosmotic shock.</text>
</comment>
<comment type="subunit">
    <text evidence="1">Homoheptamer.</text>
</comment>
<comment type="interaction">
    <interactant intactId="EBI-16017731">
        <id>Q8R6L9</id>
    </interactant>
    <interactant intactId="EBI-16017731">
        <id>Q8R6L9</id>
        <label>mscS</label>
    </interactant>
    <organismsDiffer>false</organismsDiffer>
    <experiments>2</experiments>
</comment>
<comment type="subcellular location">
    <subcellularLocation>
        <location evidence="3">Cell inner membrane</location>
        <topology evidence="1">Multi-pass membrane protein</topology>
    </subcellularLocation>
</comment>
<comment type="domain">
    <text evidence="1">The C-terminal cytoplasmic domain is important for channel ion selectivity.</text>
</comment>
<comment type="similarity">
    <text evidence="2">Belongs to the MscS (TC 1.A.23) family.</text>
</comment>
<gene>
    <name evidence="4" type="primary">mscS</name>
    <name evidence="4" type="ordered locus">TTE2783</name>
</gene>
<feature type="chain" id="PRO_0000440564" description="Small-conductance mechanosensitive channel">
    <location>
        <begin position="1"/>
        <end position="282"/>
    </location>
</feature>
<feature type="topological domain" description="Periplasmic" evidence="3">
    <location>
        <begin position="1"/>
        <end position="23"/>
    </location>
</feature>
<feature type="transmembrane region" description="Helical" evidence="1">
    <location>
        <begin position="24"/>
        <end position="46"/>
    </location>
</feature>
<feature type="topological domain" description="Cytoplasmic" evidence="3">
    <location>
        <begin position="47"/>
        <end position="66"/>
    </location>
</feature>
<feature type="transmembrane region" description="Helical" evidence="1">
    <location>
        <begin position="67"/>
        <end position="87"/>
    </location>
</feature>
<feature type="topological domain" description="Periplasmic" evidence="3">
    <location>
        <begin position="88"/>
        <end position="89"/>
    </location>
</feature>
<feature type="transmembrane region" description="Helical" evidence="1">
    <location>
        <begin position="90"/>
        <end position="110"/>
    </location>
</feature>
<feature type="topological domain" description="Cytoplasmic" evidence="3">
    <location>
        <begin position="111"/>
        <end position="282"/>
    </location>
</feature>
<feature type="mutagenesis site" description="Loss of channel activity, possibly due to physical obstruction of the ion permeation pathway." evidence="1">
    <original>L</original>
    <variation>Y</variation>
    <location>
        <position position="276"/>
    </location>
</feature>
<feature type="mutagenesis site" description="Reduces channel ion selectivity." evidence="1">
    <original>E</original>
    <variation>A</variation>
    <location>
        <position position="278"/>
    </location>
</feature>
<feature type="mutagenesis site" description="Loss of channel ion selectivity." evidence="1">
    <original>E</original>
    <variation>R</variation>
    <location>
        <position position="278"/>
    </location>
</feature>
<feature type="helix" evidence="9">
    <location>
        <begin position="17"/>
        <end position="50"/>
    </location>
</feature>
<feature type="helix" evidence="9">
    <location>
        <begin position="60"/>
        <end position="87"/>
    </location>
</feature>
<feature type="helix" evidence="9">
    <location>
        <begin position="92"/>
        <end position="109"/>
    </location>
</feature>
<feature type="helix" evidence="9">
    <location>
        <begin position="111"/>
        <end position="125"/>
    </location>
</feature>
<feature type="strand" evidence="9">
    <location>
        <begin position="134"/>
        <end position="137"/>
    </location>
</feature>
<feature type="strand" evidence="9">
    <location>
        <begin position="140"/>
        <end position="147"/>
    </location>
</feature>
<feature type="strand" evidence="9">
    <location>
        <begin position="149"/>
        <end position="156"/>
    </location>
</feature>
<feature type="turn" evidence="9">
    <location>
        <begin position="157"/>
        <end position="159"/>
    </location>
</feature>
<feature type="strand" evidence="9">
    <location>
        <begin position="160"/>
        <end position="165"/>
    </location>
</feature>
<feature type="helix" evidence="9">
    <location>
        <begin position="166"/>
        <end position="168"/>
    </location>
</feature>
<feature type="strand" evidence="9">
    <location>
        <begin position="172"/>
        <end position="174"/>
    </location>
</feature>
<feature type="strand" evidence="9">
    <location>
        <begin position="176"/>
        <end position="178"/>
    </location>
</feature>
<feature type="strand" evidence="9">
    <location>
        <begin position="180"/>
        <end position="189"/>
    </location>
</feature>
<feature type="helix" evidence="9">
    <location>
        <begin position="194"/>
        <end position="211"/>
    </location>
</feature>
<feature type="strand" evidence="9">
    <location>
        <begin position="213"/>
        <end position="217"/>
    </location>
</feature>
<feature type="strand" evidence="9">
    <location>
        <begin position="220"/>
        <end position="228"/>
    </location>
</feature>
<feature type="strand" evidence="9">
    <location>
        <begin position="231"/>
        <end position="241"/>
    </location>
</feature>
<feature type="helix" evidence="9">
    <location>
        <begin position="245"/>
        <end position="262"/>
    </location>
</feature>
<feature type="strand" evidence="8">
    <location>
        <begin position="271"/>
        <end position="277"/>
    </location>
</feature>
<evidence type="ECO:0000269" key="1">
    <source>
    </source>
</evidence>
<evidence type="ECO:0000305" key="2"/>
<evidence type="ECO:0000305" key="3">
    <source>
    </source>
</evidence>
<evidence type="ECO:0000312" key="4">
    <source>
        <dbReference type="EMBL" id="AAM25887.1"/>
    </source>
</evidence>
<evidence type="ECO:0000312" key="5">
    <source>
        <dbReference type="Proteomes" id="UP000000555"/>
    </source>
</evidence>
<evidence type="ECO:0007744" key="6">
    <source>
        <dbReference type="PDB" id="3T9N"/>
    </source>
</evidence>
<evidence type="ECO:0007744" key="7">
    <source>
        <dbReference type="PDB" id="3UDC"/>
    </source>
</evidence>
<evidence type="ECO:0007829" key="8">
    <source>
        <dbReference type="PDB" id="3T9N"/>
    </source>
</evidence>
<evidence type="ECO:0007829" key="9">
    <source>
        <dbReference type="PDB" id="3UDC"/>
    </source>
</evidence>
<proteinExistence type="evidence at protein level"/>
<sequence length="282" mass="32034">MWADIYHKLVEIYDIKAVKFLLDVLKILIIAFIGIKFADFLIYRFYKLYSKSKIQLPQRKIDTLTSLTKNAVRYIIYFLAGASILKLFNIDMTSLLAVAGIGSLAIGFGAQNLVKDMISGFFIIFEDQFSVGDYVTINGISGTVEEIGLRVTKIRGFSDGLHIIPNGEIKMVTNLTKDSMMAVVNIAFPIDEDVDKIIEGLQEICEEVKKSRDDLIEGPTVLGITDMQDSKLVIMVYAKTQPMQKWAVERDIRYRVKKMFDQKNISFPYPRTTVILSEKKTN</sequence>
<organism evidence="5">
    <name type="scientific">Caldanaerobacter subterraneus subsp. tengcongensis (strain DSM 15242 / JCM 11007 / NBRC 100824 / MB4)</name>
    <name type="common">Thermoanaerobacter tengcongensis</name>
    <dbReference type="NCBI Taxonomy" id="273068"/>
    <lineage>
        <taxon>Bacteria</taxon>
        <taxon>Bacillati</taxon>
        <taxon>Bacillota</taxon>
        <taxon>Clostridia</taxon>
        <taxon>Thermoanaerobacterales</taxon>
        <taxon>Thermoanaerobacteraceae</taxon>
        <taxon>Caldanaerobacter</taxon>
    </lineage>
</organism>
<reference evidence="4 5" key="1">
    <citation type="journal article" date="2002" name="Genome Res.">
        <title>A complete sequence of the T. tengcongensis genome.</title>
        <authorList>
            <person name="Bao Q."/>
            <person name="Tian Y."/>
            <person name="Li W."/>
            <person name="Xu Z."/>
            <person name="Xuan Z."/>
            <person name="Hu S."/>
            <person name="Dong W."/>
            <person name="Yang J."/>
            <person name="Chen Y."/>
            <person name="Xue Y."/>
            <person name="Xu Y."/>
            <person name="Lai X."/>
            <person name="Huang L."/>
            <person name="Dong X."/>
            <person name="Ma Y."/>
            <person name="Ling L."/>
            <person name="Tan H."/>
            <person name="Chen R."/>
            <person name="Wang J."/>
            <person name="Yu J."/>
            <person name="Yang H."/>
        </authorList>
    </citation>
    <scope>NUCLEOTIDE SEQUENCE [LARGE SCALE GENOMIC DNA]</scope>
    <source>
        <strain evidence="5">DSM 15242 / JCM 11007 / NBRC 100824 / MB4</strain>
    </source>
</reference>
<reference evidence="6 7" key="2">
    <citation type="journal article" date="2012" name="Proc. Natl. Acad. Sci. U.S.A.">
        <title>Structure and molecular mechanism of an anion-selective mechanosensitive channel of small conductance.</title>
        <authorList>
            <person name="Zhang X."/>
            <person name="Wang J."/>
            <person name="Feng Y."/>
            <person name="Ge J."/>
            <person name="Li W."/>
            <person name="Sun W."/>
            <person name="Iscla I."/>
            <person name="Yu J."/>
            <person name="Blount P."/>
            <person name="Li Y."/>
            <person name="Yang M."/>
        </authorList>
    </citation>
    <scope>X-RAY CRYSTALLOGRAPHY (3.35 ANGSTROMS)</scope>
    <scope>FUNCTION</scope>
    <scope>SUBCELLULAR LOCATION</scope>
    <scope>TOPOLOGY</scope>
    <scope>SUBUNIT</scope>
    <scope>DOMAIN</scope>
    <scope>MUTAGENESIS OF LEU-276 AND GLU-278</scope>
</reference>